<feature type="chain" id="PRO_0000233603" description="Small ribosomal subunit protein uS17">
    <location>
        <begin position="1"/>
        <end position="84"/>
    </location>
</feature>
<dbReference type="EMBL" id="AE003852">
    <property type="protein sequence ID" value="AAF95728.1"/>
    <property type="molecule type" value="Genomic_DNA"/>
</dbReference>
<dbReference type="PIR" id="E82058">
    <property type="entry name" value="E82058"/>
</dbReference>
<dbReference type="RefSeq" id="NP_232215.1">
    <property type="nucleotide sequence ID" value="NC_002505.1"/>
</dbReference>
<dbReference type="RefSeq" id="WP_001280803.1">
    <property type="nucleotide sequence ID" value="NZ_LT906614.1"/>
</dbReference>
<dbReference type="SMR" id="Q9KNZ3"/>
<dbReference type="STRING" id="243277.VC_2587"/>
<dbReference type="DNASU" id="2615604"/>
<dbReference type="EnsemblBacteria" id="AAF95728">
    <property type="protein sequence ID" value="AAF95728"/>
    <property type="gene ID" value="VC_2587"/>
</dbReference>
<dbReference type="GeneID" id="69718809"/>
<dbReference type="KEGG" id="vch:VC_2587"/>
<dbReference type="PATRIC" id="fig|243277.26.peg.2466"/>
<dbReference type="eggNOG" id="COG0186">
    <property type="taxonomic scope" value="Bacteria"/>
</dbReference>
<dbReference type="HOGENOM" id="CLU_073626_1_1_6"/>
<dbReference type="Proteomes" id="UP000000584">
    <property type="component" value="Chromosome 1"/>
</dbReference>
<dbReference type="GO" id="GO:0022627">
    <property type="term" value="C:cytosolic small ribosomal subunit"/>
    <property type="evidence" value="ECO:0000318"/>
    <property type="project" value="GO_Central"/>
</dbReference>
<dbReference type="GO" id="GO:0019843">
    <property type="term" value="F:rRNA binding"/>
    <property type="evidence" value="ECO:0007669"/>
    <property type="project" value="UniProtKB-UniRule"/>
</dbReference>
<dbReference type="GO" id="GO:0003735">
    <property type="term" value="F:structural constituent of ribosome"/>
    <property type="evidence" value="ECO:0000318"/>
    <property type="project" value="GO_Central"/>
</dbReference>
<dbReference type="GO" id="GO:0006412">
    <property type="term" value="P:translation"/>
    <property type="evidence" value="ECO:0007669"/>
    <property type="project" value="UniProtKB-UniRule"/>
</dbReference>
<dbReference type="CDD" id="cd00364">
    <property type="entry name" value="Ribosomal_uS17"/>
    <property type="match status" value="1"/>
</dbReference>
<dbReference type="FunFam" id="2.40.50.140:FF:000014">
    <property type="entry name" value="30S ribosomal protein S17"/>
    <property type="match status" value="1"/>
</dbReference>
<dbReference type="Gene3D" id="2.40.50.140">
    <property type="entry name" value="Nucleic acid-binding proteins"/>
    <property type="match status" value="1"/>
</dbReference>
<dbReference type="HAMAP" id="MF_01345_B">
    <property type="entry name" value="Ribosomal_uS17_B"/>
    <property type="match status" value="1"/>
</dbReference>
<dbReference type="InterPro" id="IPR012340">
    <property type="entry name" value="NA-bd_OB-fold"/>
</dbReference>
<dbReference type="InterPro" id="IPR000266">
    <property type="entry name" value="Ribosomal_uS17"/>
</dbReference>
<dbReference type="InterPro" id="IPR019984">
    <property type="entry name" value="Ribosomal_uS17_bact/chlr"/>
</dbReference>
<dbReference type="InterPro" id="IPR019979">
    <property type="entry name" value="Ribosomal_uS17_CS"/>
</dbReference>
<dbReference type="NCBIfam" id="NF004123">
    <property type="entry name" value="PRK05610.1"/>
    <property type="match status" value="1"/>
</dbReference>
<dbReference type="NCBIfam" id="TIGR03635">
    <property type="entry name" value="uS17_bact"/>
    <property type="match status" value="1"/>
</dbReference>
<dbReference type="PANTHER" id="PTHR10744">
    <property type="entry name" value="40S RIBOSOMAL PROTEIN S11 FAMILY MEMBER"/>
    <property type="match status" value="1"/>
</dbReference>
<dbReference type="PANTHER" id="PTHR10744:SF1">
    <property type="entry name" value="SMALL RIBOSOMAL SUBUNIT PROTEIN US17M"/>
    <property type="match status" value="1"/>
</dbReference>
<dbReference type="Pfam" id="PF00366">
    <property type="entry name" value="Ribosomal_S17"/>
    <property type="match status" value="1"/>
</dbReference>
<dbReference type="PRINTS" id="PR00973">
    <property type="entry name" value="RIBOSOMALS17"/>
</dbReference>
<dbReference type="SUPFAM" id="SSF50249">
    <property type="entry name" value="Nucleic acid-binding proteins"/>
    <property type="match status" value="1"/>
</dbReference>
<dbReference type="PROSITE" id="PS00056">
    <property type="entry name" value="RIBOSOMAL_S17"/>
    <property type="match status" value="1"/>
</dbReference>
<gene>
    <name evidence="1" type="primary">rpsQ</name>
    <name type="ordered locus">VC_2587</name>
</gene>
<name>RS17_VIBCH</name>
<protein>
    <recommendedName>
        <fullName evidence="1">Small ribosomal subunit protein uS17</fullName>
    </recommendedName>
    <alternativeName>
        <fullName evidence="2">30S ribosomal protein S17</fullName>
    </alternativeName>
</protein>
<keyword id="KW-1185">Reference proteome</keyword>
<keyword id="KW-0687">Ribonucleoprotein</keyword>
<keyword id="KW-0689">Ribosomal protein</keyword>
<keyword id="KW-0694">RNA-binding</keyword>
<keyword id="KW-0699">rRNA-binding</keyword>
<organism>
    <name type="scientific">Vibrio cholerae serotype O1 (strain ATCC 39315 / El Tor Inaba N16961)</name>
    <dbReference type="NCBI Taxonomy" id="243277"/>
    <lineage>
        <taxon>Bacteria</taxon>
        <taxon>Pseudomonadati</taxon>
        <taxon>Pseudomonadota</taxon>
        <taxon>Gammaproteobacteria</taxon>
        <taxon>Vibrionales</taxon>
        <taxon>Vibrionaceae</taxon>
        <taxon>Vibrio</taxon>
    </lineage>
</organism>
<sequence>MSDKIRTQLGRVVSDKMDKSIVVAIERMVKHPIYGKFVKRTTKVHAHDENNECGIGDTVEIRECRPLSKTKSWTLVKIVEKAKM</sequence>
<evidence type="ECO:0000255" key="1">
    <source>
        <dbReference type="HAMAP-Rule" id="MF_01345"/>
    </source>
</evidence>
<evidence type="ECO:0000305" key="2"/>
<reference key="1">
    <citation type="journal article" date="2000" name="Nature">
        <title>DNA sequence of both chromosomes of the cholera pathogen Vibrio cholerae.</title>
        <authorList>
            <person name="Heidelberg J.F."/>
            <person name="Eisen J.A."/>
            <person name="Nelson W.C."/>
            <person name="Clayton R.A."/>
            <person name="Gwinn M.L."/>
            <person name="Dodson R.J."/>
            <person name="Haft D.H."/>
            <person name="Hickey E.K."/>
            <person name="Peterson J.D."/>
            <person name="Umayam L.A."/>
            <person name="Gill S.R."/>
            <person name="Nelson K.E."/>
            <person name="Read T.D."/>
            <person name="Tettelin H."/>
            <person name="Richardson D.L."/>
            <person name="Ermolaeva M.D."/>
            <person name="Vamathevan J.J."/>
            <person name="Bass S."/>
            <person name="Qin H."/>
            <person name="Dragoi I."/>
            <person name="Sellers P."/>
            <person name="McDonald L.A."/>
            <person name="Utterback T.R."/>
            <person name="Fleischmann R.D."/>
            <person name="Nierman W.C."/>
            <person name="White O."/>
            <person name="Salzberg S.L."/>
            <person name="Smith H.O."/>
            <person name="Colwell R.R."/>
            <person name="Mekalanos J.J."/>
            <person name="Venter J.C."/>
            <person name="Fraser C.M."/>
        </authorList>
    </citation>
    <scope>NUCLEOTIDE SEQUENCE [LARGE SCALE GENOMIC DNA]</scope>
    <source>
        <strain>ATCC 39315 / El Tor Inaba N16961</strain>
    </source>
</reference>
<proteinExistence type="inferred from homology"/>
<accession>Q9KNZ3</accession>
<comment type="function">
    <text evidence="1">One of the primary rRNA binding proteins, it binds specifically to the 5'-end of 16S ribosomal RNA.</text>
</comment>
<comment type="subunit">
    <text evidence="1">Part of the 30S ribosomal subunit.</text>
</comment>
<comment type="similarity">
    <text evidence="1">Belongs to the universal ribosomal protein uS17 family.</text>
</comment>